<gene>
    <name evidence="1" type="primary">dnaG</name>
    <name type="ordered locus">Tpen_0501</name>
</gene>
<reference key="1">
    <citation type="journal article" date="2008" name="J. Bacteriol.">
        <title>Genome sequence of Thermofilum pendens reveals an exceptional loss of biosynthetic pathways without genome reduction.</title>
        <authorList>
            <person name="Anderson I."/>
            <person name="Rodriguez J."/>
            <person name="Susanti D."/>
            <person name="Porat I."/>
            <person name="Reich C."/>
            <person name="Ulrich L.E."/>
            <person name="Elkins J.G."/>
            <person name="Mavromatis K."/>
            <person name="Lykidis A."/>
            <person name="Kim E."/>
            <person name="Thompson L.S."/>
            <person name="Nolan M."/>
            <person name="Land M."/>
            <person name="Copeland A."/>
            <person name="Lapidus A."/>
            <person name="Lucas S."/>
            <person name="Detter C."/>
            <person name="Zhulin I.B."/>
            <person name="Olsen G.J."/>
            <person name="Whitman W."/>
            <person name="Mukhopadhyay B."/>
            <person name="Bristow J."/>
            <person name="Kyrpides N."/>
        </authorList>
    </citation>
    <scope>NUCLEOTIDE SEQUENCE [LARGE SCALE GENOMIC DNA]</scope>
    <source>
        <strain>DSM 2475 / Hrk 5</strain>
    </source>
</reference>
<keyword id="KW-0235">DNA replication</keyword>
<keyword id="KW-0240">DNA-directed RNA polymerase</keyword>
<keyword id="KW-0271">Exosome</keyword>
<keyword id="KW-0460">Magnesium</keyword>
<keyword id="KW-0479">Metal-binding</keyword>
<keyword id="KW-0548">Nucleotidyltransferase</keyword>
<keyword id="KW-0639">Primosome</keyword>
<keyword id="KW-1185">Reference proteome</keyword>
<keyword id="KW-0804">Transcription</keyword>
<keyword id="KW-0808">Transferase</keyword>
<feature type="chain" id="PRO_1000000567" description="DNA primase DnaG">
    <location>
        <begin position="1"/>
        <end position="426"/>
    </location>
</feature>
<feature type="domain" description="Toprim" evidence="1">
    <location>
        <begin position="171"/>
        <end position="245"/>
    </location>
</feature>
<feature type="region of interest" description="Disordered" evidence="2">
    <location>
        <begin position="407"/>
        <end position="426"/>
    </location>
</feature>
<feature type="compositionally biased region" description="Polar residues" evidence="2">
    <location>
        <begin position="413"/>
        <end position="426"/>
    </location>
</feature>
<feature type="binding site" evidence="1">
    <location>
        <position position="177"/>
    </location>
    <ligand>
        <name>Mg(2+)</name>
        <dbReference type="ChEBI" id="CHEBI:18420"/>
        <label>1</label>
        <note>catalytic</note>
    </ligand>
</feature>
<feature type="binding site" evidence="1">
    <location>
        <position position="219"/>
    </location>
    <ligand>
        <name>Mg(2+)</name>
        <dbReference type="ChEBI" id="CHEBI:18420"/>
        <label>1</label>
        <note>catalytic</note>
    </ligand>
</feature>
<feature type="binding site" evidence="1">
    <location>
        <position position="219"/>
    </location>
    <ligand>
        <name>Mg(2+)</name>
        <dbReference type="ChEBI" id="CHEBI:18420"/>
        <label>2</label>
    </ligand>
</feature>
<feature type="binding site" evidence="1">
    <location>
        <position position="221"/>
    </location>
    <ligand>
        <name>Mg(2+)</name>
        <dbReference type="ChEBI" id="CHEBI:18420"/>
        <label>2</label>
    </ligand>
</feature>
<dbReference type="EC" id="2.7.7.101" evidence="1"/>
<dbReference type="EMBL" id="CP000505">
    <property type="protein sequence ID" value="ABL77908.1"/>
    <property type="molecule type" value="Genomic_DNA"/>
</dbReference>
<dbReference type="RefSeq" id="WP_011752173.1">
    <property type="nucleotide sequence ID" value="NC_008698.1"/>
</dbReference>
<dbReference type="SMR" id="A1RXH8"/>
<dbReference type="STRING" id="368408.Tpen_0501"/>
<dbReference type="EnsemblBacteria" id="ABL77908">
    <property type="protein sequence ID" value="ABL77908"/>
    <property type="gene ID" value="Tpen_0501"/>
</dbReference>
<dbReference type="GeneID" id="4601335"/>
<dbReference type="KEGG" id="tpe:Tpen_0501"/>
<dbReference type="eggNOG" id="arCOG04281">
    <property type="taxonomic scope" value="Archaea"/>
</dbReference>
<dbReference type="HOGENOM" id="CLU_034626_0_0_2"/>
<dbReference type="OrthoDB" id="8643at2157"/>
<dbReference type="Proteomes" id="UP000000641">
    <property type="component" value="Chromosome"/>
</dbReference>
<dbReference type="GO" id="GO:0005737">
    <property type="term" value="C:cytoplasm"/>
    <property type="evidence" value="ECO:0007669"/>
    <property type="project" value="TreeGrafter"/>
</dbReference>
<dbReference type="GO" id="GO:0000428">
    <property type="term" value="C:DNA-directed RNA polymerase complex"/>
    <property type="evidence" value="ECO:0007669"/>
    <property type="project" value="UniProtKB-KW"/>
</dbReference>
<dbReference type="GO" id="GO:0000178">
    <property type="term" value="C:exosome (RNase complex)"/>
    <property type="evidence" value="ECO:0007669"/>
    <property type="project" value="UniProtKB-KW"/>
</dbReference>
<dbReference type="GO" id="GO:1990077">
    <property type="term" value="C:primosome complex"/>
    <property type="evidence" value="ECO:0007669"/>
    <property type="project" value="UniProtKB-KW"/>
</dbReference>
<dbReference type="GO" id="GO:0003899">
    <property type="term" value="F:DNA-directed RNA polymerase activity"/>
    <property type="evidence" value="ECO:0007669"/>
    <property type="project" value="InterPro"/>
</dbReference>
<dbReference type="GO" id="GO:0046872">
    <property type="term" value="F:metal ion binding"/>
    <property type="evidence" value="ECO:0007669"/>
    <property type="project" value="UniProtKB-KW"/>
</dbReference>
<dbReference type="GO" id="GO:0008143">
    <property type="term" value="F:poly(A) binding"/>
    <property type="evidence" value="ECO:0007669"/>
    <property type="project" value="InterPro"/>
</dbReference>
<dbReference type="GO" id="GO:0006269">
    <property type="term" value="P:DNA replication, synthesis of primer"/>
    <property type="evidence" value="ECO:0007669"/>
    <property type="project" value="UniProtKB-UniRule"/>
</dbReference>
<dbReference type="CDD" id="cd01029">
    <property type="entry name" value="TOPRIM_primases"/>
    <property type="match status" value="1"/>
</dbReference>
<dbReference type="Gene3D" id="3.40.1360.10">
    <property type="match status" value="1"/>
</dbReference>
<dbReference type="HAMAP" id="MF_00007">
    <property type="entry name" value="DNA_primase_DnaG_arc"/>
    <property type="match status" value="1"/>
</dbReference>
<dbReference type="InterPro" id="IPR050219">
    <property type="entry name" value="DnaG_primase"/>
</dbReference>
<dbReference type="InterPro" id="IPR020607">
    <property type="entry name" value="Primase_DnaG_arc"/>
</dbReference>
<dbReference type="InterPro" id="IPR034154">
    <property type="entry name" value="TOPRIM_DnaG/twinkle"/>
</dbReference>
<dbReference type="InterPro" id="IPR006171">
    <property type="entry name" value="TOPRIM_dom"/>
</dbReference>
<dbReference type="NCBIfam" id="NF003108">
    <property type="entry name" value="PRK04031.1-1"/>
    <property type="match status" value="1"/>
</dbReference>
<dbReference type="PANTHER" id="PTHR30313">
    <property type="entry name" value="DNA PRIMASE"/>
    <property type="match status" value="1"/>
</dbReference>
<dbReference type="PANTHER" id="PTHR30313:SF2">
    <property type="entry name" value="DNA PRIMASE"/>
    <property type="match status" value="1"/>
</dbReference>
<dbReference type="Pfam" id="PF13662">
    <property type="entry name" value="Toprim_4"/>
    <property type="match status" value="1"/>
</dbReference>
<dbReference type="SMART" id="SM00493">
    <property type="entry name" value="TOPRIM"/>
    <property type="match status" value="1"/>
</dbReference>
<dbReference type="SUPFAM" id="SSF110455">
    <property type="entry name" value="Toprim domain"/>
    <property type="match status" value="1"/>
</dbReference>
<dbReference type="PROSITE" id="PS50880">
    <property type="entry name" value="TOPRIM"/>
    <property type="match status" value="1"/>
</dbReference>
<sequence>MGGLPVSPKYVIKAKMEIKGSVEKHDIIGAIFGQAEGLLGSELDLRELQKTGRVGRIEVNTRSQDGTLVAEIEIPTNLDMAETAIIAATIESIDKVGPYPAKTEVVSIEDVRAEKRQKIIERAVELYKKLLESVPESRELVEEVLRRVRVAEIVEYGEEKLPGGPEVETSDTVILVEGRADVQNLLRHGYKNVIALGGATIPKSIKSLVENKKVILFVDGDRGGELIARNVINALKVDFVARAPPGREVEDLTAKEIARALQNKIPVDEFLQALEREKKQQKEVKAEIVVPPAKLIKSATKKNPEIAQEIVVPAEVYEKLEELKGTLEAVIYDENWQVVEKVPVRDLVNRLKEVERAAHVVLDGIITQRLVDVAYTKGLKSLIGVRIGEIIRKPDNIVLATFSSVKKSEENIQESVSTGESAQTSP</sequence>
<protein>
    <recommendedName>
        <fullName evidence="1">DNA primase DnaG</fullName>
        <ecNumber evidence="1">2.7.7.101</ecNumber>
    </recommendedName>
</protein>
<proteinExistence type="inferred from homology"/>
<accession>A1RXH8</accession>
<comment type="function">
    <text evidence="1">RNA polymerase that catalyzes the synthesis of short RNA molecules used as primers for DNA polymerase during DNA replication. Also part of the exosome, which is a complex involved in RNA degradation. Acts as a poly(A)-binding protein that enhances the interaction between heteromeric, adenine-rich transcripts and the exosome.</text>
</comment>
<comment type="catalytic activity">
    <reaction evidence="1">
        <text>ssDNA + n NTP = ssDNA/pppN(pN)n-1 hybrid + (n-1) diphosphate.</text>
        <dbReference type="EC" id="2.7.7.101"/>
    </reaction>
</comment>
<comment type="cofactor">
    <cofactor evidence="1">
        <name>Mg(2+)</name>
        <dbReference type="ChEBI" id="CHEBI:18420"/>
    </cofactor>
    <text evidence="1">Binds two Mg(2+) per subunit.</text>
</comment>
<comment type="subunit">
    <text evidence="1">Forms a ternary complex with MCM helicase and DNA. Component of the archaeal exosome complex.</text>
</comment>
<comment type="similarity">
    <text evidence="1">Belongs to the archaeal DnaG primase family.</text>
</comment>
<organism>
    <name type="scientific">Thermofilum pendens (strain DSM 2475 / Hrk 5)</name>
    <dbReference type="NCBI Taxonomy" id="368408"/>
    <lineage>
        <taxon>Archaea</taxon>
        <taxon>Thermoproteota</taxon>
        <taxon>Thermoprotei</taxon>
        <taxon>Thermofilales</taxon>
        <taxon>Thermofilaceae</taxon>
        <taxon>Thermofilum</taxon>
    </lineage>
</organism>
<evidence type="ECO:0000255" key="1">
    <source>
        <dbReference type="HAMAP-Rule" id="MF_00007"/>
    </source>
</evidence>
<evidence type="ECO:0000256" key="2">
    <source>
        <dbReference type="SAM" id="MobiDB-lite"/>
    </source>
</evidence>
<name>DNAG_THEPD</name>